<sequence length="513" mass="61562">MEKLERYSEKRKSRQQYFVYPLLFQEYIYAFAHDYALKGFEPVEIVGYNNKKFSSLLVKRLIIRMYQQNFWINSVNHPNQDRLLDHSNHFYSKFYSQILSEGFAIVLEIPFSLGELSCPGEKEIPKFQNLQSIHSIFPFLEEKFLHLHYLSHIEIPYPIHFEILVQLLEYRIQDVPSLHLLRFFLNYYSNWNSLITSMKSIFLLKKENKRLFRFLYNSYVSEYEFFLLFLRKQSSSLRLISSGTFLERIHFSMKMEHFGVMYPRFFQKTLWFFMDPLMHYVRYQGKAILASKGTLLLKKKWKSYLVNFSQYFLSFWTQPQRIRLNQLRNSCFDFLGYRSSVPINTFLVRNQMLENFFLIDTRMKKLDTTAPATPLIGSLSKAQFCTGLGHPISKPIWTDLSDWDILDRFGRICRNLFHYHSGSSKKQALYQLKYILRLSCARTLARKHKSTVRTFMQRLGSVFLEEFFTEEEQVFSLMFAKTTHFSFHGSHSERIWYFDIIRIDDLVNPLTLN</sequence>
<evidence type="ECO:0000255" key="1">
    <source>
        <dbReference type="HAMAP-Rule" id="MF_01390"/>
    </source>
</evidence>
<proteinExistence type="inferred from homology"/>
<keyword id="KW-0150">Chloroplast</keyword>
<keyword id="KW-0507">mRNA processing</keyword>
<keyword id="KW-0934">Plastid</keyword>
<keyword id="KW-0694">RNA-binding</keyword>
<keyword id="KW-0819">tRNA processing</keyword>
<accession>Q9TI97</accession>
<dbReference type="EMBL" id="AF144601">
    <property type="protein sequence ID" value="AAF20357.1"/>
    <property type="molecule type" value="Genomic_DNA"/>
</dbReference>
<dbReference type="GO" id="GO:0009507">
    <property type="term" value="C:chloroplast"/>
    <property type="evidence" value="ECO:0007669"/>
    <property type="project" value="UniProtKB-SubCell"/>
</dbReference>
<dbReference type="GO" id="GO:0003723">
    <property type="term" value="F:RNA binding"/>
    <property type="evidence" value="ECO:0007669"/>
    <property type="project" value="UniProtKB-KW"/>
</dbReference>
<dbReference type="GO" id="GO:0006397">
    <property type="term" value="P:mRNA processing"/>
    <property type="evidence" value="ECO:0007669"/>
    <property type="project" value="UniProtKB-KW"/>
</dbReference>
<dbReference type="GO" id="GO:0008380">
    <property type="term" value="P:RNA splicing"/>
    <property type="evidence" value="ECO:0007669"/>
    <property type="project" value="UniProtKB-UniRule"/>
</dbReference>
<dbReference type="GO" id="GO:0008033">
    <property type="term" value="P:tRNA processing"/>
    <property type="evidence" value="ECO:0007669"/>
    <property type="project" value="UniProtKB-KW"/>
</dbReference>
<dbReference type="HAMAP" id="MF_01390">
    <property type="entry name" value="MatK"/>
    <property type="match status" value="1"/>
</dbReference>
<dbReference type="InterPro" id="IPR024937">
    <property type="entry name" value="Domain_X"/>
</dbReference>
<dbReference type="InterPro" id="IPR002866">
    <property type="entry name" value="Maturase_MatK"/>
</dbReference>
<dbReference type="InterPro" id="IPR024942">
    <property type="entry name" value="Maturase_MatK_N"/>
</dbReference>
<dbReference type="PANTHER" id="PTHR34811">
    <property type="entry name" value="MATURASE K"/>
    <property type="match status" value="1"/>
</dbReference>
<dbReference type="PANTHER" id="PTHR34811:SF1">
    <property type="entry name" value="MATURASE K"/>
    <property type="match status" value="1"/>
</dbReference>
<dbReference type="Pfam" id="PF01348">
    <property type="entry name" value="Intron_maturas2"/>
    <property type="match status" value="1"/>
</dbReference>
<dbReference type="Pfam" id="PF01824">
    <property type="entry name" value="MatK_N"/>
    <property type="match status" value="1"/>
</dbReference>
<reference key="1">
    <citation type="submission" date="1999-04" db="EMBL/GenBank/DDBJ databases">
        <title>Phylogenetic relationships in subfamily Chloridoideae (Poaceae) based on matK sequences: a preliminary assessment.</title>
        <authorList>
            <person name="Hilu K.W."/>
            <person name="Alice L.A."/>
        </authorList>
    </citation>
    <scope>NUCLEOTIDE SEQUENCE [GENOMIC DNA]</scope>
</reference>
<name>MATK_SPOIN</name>
<geneLocation type="chloroplast"/>
<organism>
    <name type="scientific">Sporobolus indicus</name>
    <name type="common">Smut grass</name>
    <dbReference type="NCBI Taxonomy" id="38731"/>
    <lineage>
        <taxon>Eukaryota</taxon>
        <taxon>Viridiplantae</taxon>
        <taxon>Streptophyta</taxon>
        <taxon>Embryophyta</taxon>
        <taxon>Tracheophyta</taxon>
        <taxon>Spermatophyta</taxon>
        <taxon>Magnoliopsida</taxon>
        <taxon>Liliopsida</taxon>
        <taxon>Poales</taxon>
        <taxon>Poaceae</taxon>
        <taxon>PACMAD clade</taxon>
        <taxon>Chloridoideae</taxon>
        <taxon>Zoysieae</taxon>
        <taxon>Sporobolinae</taxon>
        <taxon>Sporobolus</taxon>
    </lineage>
</organism>
<protein>
    <recommendedName>
        <fullName evidence="1">Maturase K</fullName>
    </recommendedName>
    <alternativeName>
        <fullName evidence="1">Intron maturase</fullName>
    </alternativeName>
</protein>
<comment type="function">
    <text evidence="1">Usually encoded in the trnK tRNA gene intron. Probably assists in splicing its own and other chloroplast group II introns.</text>
</comment>
<comment type="subcellular location">
    <subcellularLocation>
        <location>Plastid</location>
        <location>Chloroplast</location>
    </subcellularLocation>
</comment>
<comment type="similarity">
    <text evidence="1">Belongs to the intron maturase 2 family. MatK subfamily.</text>
</comment>
<feature type="chain" id="PRO_0000143721" description="Maturase K">
    <location>
        <begin position="1"/>
        <end position="513"/>
    </location>
</feature>
<gene>
    <name evidence="1" type="primary">matK</name>
</gene>